<gene>
    <name type="ordered locus">TTE2299</name>
</gene>
<feature type="chain" id="PRO_0000136821" description="RNA-binding protein TTE2299">
    <location>
        <begin position="1"/>
        <end position="82"/>
    </location>
</feature>
<keyword id="KW-1185">Reference proteome</keyword>
<keyword id="KW-0694">RNA-binding</keyword>
<dbReference type="EMBL" id="AE008691">
    <property type="protein sequence ID" value="AAM25441.1"/>
    <property type="molecule type" value="Genomic_DNA"/>
</dbReference>
<dbReference type="RefSeq" id="WP_011026344.1">
    <property type="nucleotide sequence ID" value="NZ_JANUCV010000001.1"/>
</dbReference>
<dbReference type="SMR" id="Q8R7U8"/>
<dbReference type="STRING" id="273068.TTE2299"/>
<dbReference type="KEGG" id="tte:TTE2299"/>
<dbReference type="eggNOG" id="COG1358">
    <property type="taxonomic scope" value="Bacteria"/>
</dbReference>
<dbReference type="HOGENOM" id="CLU_168063_2_0_9"/>
<dbReference type="OrthoDB" id="2353623at2"/>
<dbReference type="Proteomes" id="UP000000555">
    <property type="component" value="Chromosome"/>
</dbReference>
<dbReference type="GO" id="GO:0003723">
    <property type="term" value="F:RNA binding"/>
    <property type="evidence" value="ECO:0007669"/>
    <property type="project" value="UniProtKB-UniRule"/>
</dbReference>
<dbReference type="Gene3D" id="3.30.1330.30">
    <property type="match status" value="1"/>
</dbReference>
<dbReference type="HAMAP" id="MF_00574">
    <property type="entry name" value="Ribosomal_eL8_Bact"/>
    <property type="match status" value="1"/>
</dbReference>
<dbReference type="InterPro" id="IPR029064">
    <property type="entry name" value="Ribosomal_eL30-like_sf"/>
</dbReference>
<dbReference type="InterPro" id="IPR004038">
    <property type="entry name" value="Ribosomal_eL8/eL30/eS12/Gad45"/>
</dbReference>
<dbReference type="InterPro" id="IPR023460">
    <property type="entry name" value="RNA_bf_YbxF-like"/>
</dbReference>
<dbReference type="NCBIfam" id="NF010124">
    <property type="entry name" value="PRK13601.1"/>
    <property type="match status" value="1"/>
</dbReference>
<dbReference type="Pfam" id="PF01248">
    <property type="entry name" value="Ribosomal_L7Ae"/>
    <property type="match status" value="1"/>
</dbReference>
<dbReference type="SUPFAM" id="SSF55315">
    <property type="entry name" value="L30e-like"/>
    <property type="match status" value="1"/>
</dbReference>
<sequence length="82" mass="8903">MAEQCPPKRVVGAKQTLKAVLNCKVAQVYIAKDAEEHVVKKIKEACEEKGIKIVYIDTMKELGRMCGIDVGAATAADVIGER</sequence>
<comment type="similarity">
    <text evidence="1">Belongs to the eukaryotic ribosomal protein eL8 family.</text>
</comment>
<organism>
    <name type="scientific">Caldanaerobacter subterraneus subsp. tengcongensis (strain DSM 15242 / JCM 11007 / NBRC 100824 / MB4)</name>
    <name type="common">Thermoanaerobacter tengcongensis</name>
    <dbReference type="NCBI Taxonomy" id="273068"/>
    <lineage>
        <taxon>Bacteria</taxon>
        <taxon>Bacillati</taxon>
        <taxon>Bacillota</taxon>
        <taxon>Clostridia</taxon>
        <taxon>Thermoanaerobacterales</taxon>
        <taxon>Thermoanaerobacteraceae</taxon>
        <taxon>Caldanaerobacter</taxon>
    </lineage>
</organism>
<evidence type="ECO:0000255" key="1">
    <source>
        <dbReference type="HAMAP-Rule" id="MF_00574"/>
    </source>
</evidence>
<evidence type="ECO:0000305" key="2"/>
<protein>
    <recommendedName>
        <fullName evidence="1">RNA-binding protein TTE2299</fullName>
    </recommendedName>
    <alternativeName>
        <fullName evidence="2">Putative ribosomal protein L7Ae-like</fullName>
    </alternativeName>
    <alternativeName>
        <fullName evidence="1">Ribosomal protein eL8-like</fullName>
    </alternativeName>
</protein>
<accession>Q8R7U8</accession>
<reference key="1">
    <citation type="journal article" date="2002" name="Genome Res.">
        <title>A complete sequence of the T. tengcongensis genome.</title>
        <authorList>
            <person name="Bao Q."/>
            <person name="Tian Y."/>
            <person name="Li W."/>
            <person name="Xu Z."/>
            <person name="Xuan Z."/>
            <person name="Hu S."/>
            <person name="Dong W."/>
            <person name="Yang J."/>
            <person name="Chen Y."/>
            <person name="Xue Y."/>
            <person name="Xu Y."/>
            <person name="Lai X."/>
            <person name="Huang L."/>
            <person name="Dong X."/>
            <person name="Ma Y."/>
            <person name="Ling L."/>
            <person name="Tan H."/>
            <person name="Chen R."/>
            <person name="Wang J."/>
            <person name="Yu J."/>
            <person name="Yang H."/>
        </authorList>
    </citation>
    <scope>NUCLEOTIDE SEQUENCE [LARGE SCALE GENOMIC DNA]</scope>
    <source>
        <strain>DSM 15242 / JCM 11007 / NBRC 100824 / MB4</strain>
    </source>
</reference>
<name>RXL7_CALS4</name>
<proteinExistence type="inferred from homology"/>